<name>ERA_YERPN</name>
<protein>
    <recommendedName>
        <fullName evidence="1">GTPase Era</fullName>
    </recommendedName>
</protein>
<comment type="function">
    <text evidence="1">An essential GTPase that binds both GDP and GTP, with rapid nucleotide exchange. Plays a role in 16S rRNA processing and 30S ribosomal subunit biogenesis and possibly also in cell cycle regulation and energy metabolism.</text>
</comment>
<comment type="subunit">
    <text evidence="1">Monomer.</text>
</comment>
<comment type="subcellular location">
    <subcellularLocation>
        <location>Cytoplasm</location>
    </subcellularLocation>
    <subcellularLocation>
        <location evidence="1">Cell inner membrane</location>
        <topology evidence="1">Peripheral membrane protein</topology>
    </subcellularLocation>
</comment>
<comment type="similarity">
    <text evidence="1 2">Belongs to the TRAFAC class TrmE-Era-EngA-EngB-Septin-like GTPase superfamily. Era GTPase family.</text>
</comment>
<gene>
    <name evidence="1" type="primary">era</name>
    <name type="ordered locus">YPN_1207</name>
    <name type="ORF">YP516_1320</name>
</gene>
<proteinExistence type="inferred from homology"/>
<evidence type="ECO:0000255" key="1">
    <source>
        <dbReference type="HAMAP-Rule" id="MF_00367"/>
    </source>
</evidence>
<evidence type="ECO:0000255" key="2">
    <source>
        <dbReference type="PROSITE-ProRule" id="PRU01050"/>
    </source>
</evidence>
<organism>
    <name type="scientific">Yersinia pestis bv. Antiqua (strain Nepal516)</name>
    <dbReference type="NCBI Taxonomy" id="377628"/>
    <lineage>
        <taxon>Bacteria</taxon>
        <taxon>Pseudomonadati</taxon>
        <taxon>Pseudomonadota</taxon>
        <taxon>Gammaproteobacteria</taxon>
        <taxon>Enterobacterales</taxon>
        <taxon>Yersiniaceae</taxon>
        <taxon>Yersinia</taxon>
    </lineage>
</organism>
<reference key="1">
    <citation type="journal article" date="2006" name="J. Bacteriol.">
        <title>Complete genome sequence of Yersinia pestis strains Antiqua and Nepal516: evidence of gene reduction in an emerging pathogen.</title>
        <authorList>
            <person name="Chain P.S.G."/>
            <person name="Hu P."/>
            <person name="Malfatti S.A."/>
            <person name="Radnedge L."/>
            <person name="Larimer F."/>
            <person name="Vergez L.M."/>
            <person name="Worsham P."/>
            <person name="Chu M.C."/>
            <person name="Andersen G.L."/>
        </authorList>
    </citation>
    <scope>NUCLEOTIDE SEQUENCE [LARGE SCALE GENOMIC DNA]</scope>
    <source>
        <strain>Nepal516</strain>
    </source>
</reference>
<reference key="2">
    <citation type="submission" date="2009-04" db="EMBL/GenBank/DDBJ databases">
        <title>Yersinia pestis Nepal516A whole genome shotgun sequencing project.</title>
        <authorList>
            <person name="Plunkett G. III"/>
            <person name="Anderson B.D."/>
            <person name="Baumler D.J."/>
            <person name="Burland V."/>
            <person name="Cabot E.L."/>
            <person name="Glasner J.D."/>
            <person name="Mau B."/>
            <person name="Neeno-Eckwall E."/>
            <person name="Perna N.T."/>
            <person name="Munk A.C."/>
            <person name="Tapia R."/>
            <person name="Green L.D."/>
            <person name="Rogers Y.C."/>
            <person name="Detter J.C."/>
            <person name="Bruce D.C."/>
            <person name="Brettin T.S."/>
        </authorList>
    </citation>
    <scope>NUCLEOTIDE SEQUENCE [LARGE SCALE GENOMIC DNA]</scope>
    <source>
        <strain>Nepal516</strain>
    </source>
</reference>
<keyword id="KW-0997">Cell inner membrane</keyword>
<keyword id="KW-1003">Cell membrane</keyword>
<keyword id="KW-0963">Cytoplasm</keyword>
<keyword id="KW-0342">GTP-binding</keyword>
<keyword id="KW-0472">Membrane</keyword>
<keyword id="KW-0547">Nucleotide-binding</keyword>
<keyword id="KW-0690">Ribosome biogenesis</keyword>
<keyword id="KW-0694">RNA-binding</keyword>
<keyword id="KW-0699">rRNA-binding</keyword>
<feature type="chain" id="PRO_1000079775" description="GTPase Era">
    <location>
        <begin position="1"/>
        <end position="303"/>
    </location>
</feature>
<feature type="domain" description="Era-type G" evidence="2">
    <location>
        <begin position="8"/>
        <end position="176"/>
    </location>
</feature>
<feature type="domain" description="KH type-2" evidence="1">
    <location>
        <begin position="207"/>
        <end position="284"/>
    </location>
</feature>
<feature type="region of interest" description="G1" evidence="2">
    <location>
        <begin position="16"/>
        <end position="23"/>
    </location>
</feature>
<feature type="region of interest" description="G2" evidence="2">
    <location>
        <begin position="42"/>
        <end position="46"/>
    </location>
</feature>
<feature type="region of interest" description="G3" evidence="2">
    <location>
        <begin position="63"/>
        <end position="66"/>
    </location>
</feature>
<feature type="region of interest" description="G4" evidence="2">
    <location>
        <begin position="125"/>
        <end position="128"/>
    </location>
</feature>
<feature type="region of interest" description="G5" evidence="2">
    <location>
        <begin position="155"/>
        <end position="157"/>
    </location>
</feature>
<feature type="binding site" evidence="1">
    <location>
        <begin position="16"/>
        <end position="23"/>
    </location>
    <ligand>
        <name>GTP</name>
        <dbReference type="ChEBI" id="CHEBI:37565"/>
    </ligand>
</feature>
<feature type="binding site" evidence="1">
    <location>
        <begin position="63"/>
        <end position="67"/>
    </location>
    <ligand>
        <name>GTP</name>
        <dbReference type="ChEBI" id="CHEBI:37565"/>
    </ligand>
</feature>
<feature type="binding site" evidence="1">
    <location>
        <begin position="125"/>
        <end position="128"/>
    </location>
    <ligand>
        <name>GTP</name>
        <dbReference type="ChEBI" id="CHEBI:37565"/>
    </ligand>
</feature>
<accession>Q1CKE3</accession>
<accession>C4GRF2</accession>
<dbReference type="EMBL" id="CP000305">
    <property type="protein sequence ID" value="ABG17537.1"/>
    <property type="molecule type" value="Genomic_DNA"/>
</dbReference>
<dbReference type="EMBL" id="ACNQ01000008">
    <property type="protein sequence ID" value="EEO77643.1"/>
    <property type="molecule type" value="Genomic_DNA"/>
</dbReference>
<dbReference type="RefSeq" id="WP_002214829.1">
    <property type="nucleotide sequence ID" value="NZ_ACNQ01000008.1"/>
</dbReference>
<dbReference type="SMR" id="Q1CKE3"/>
<dbReference type="GeneID" id="96662248"/>
<dbReference type="KEGG" id="ypn:YPN_1207"/>
<dbReference type="HOGENOM" id="CLU_038009_1_2_6"/>
<dbReference type="Proteomes" id="UP000008936">
    <property type="component" value="Chromosome"/>
</dbReference>
<dbReference type="GO" id="GO:0005829">
    <property type="term" value="C:cytosol"/>
    <property type="evidence" value="ECO:0007669"/>
    <property type="project" value="TreeGrafter"/>
</dbReference>
<dbReference type="GO" id="GO:0005886">
    <property type="term" value="C:plasma membrane"/>
    <property type="evidence" value="ECO:0007669"/>
    <property type="project" value="UniProtKB-SubCell"/>
</dbReference>
<dbReference type="GO" id="GO:0005525">
    <property type="term" value="F:GTP binding"/>
    <property type="evidence" value="ECO:0007669"/>
    <property type="project" value="UniProtKB-UniRule"/>
</dbReference>
<dbReference type="GO" id="GO:0003924">
    <property type="term" value="F:GTPase activity"/>
    <property type="evidence" value="ECO:0007669"/>
    <property type="project" value="UniProtKB-UniRule"/>
</dbReference>
<dbReference type="GO" id="GO:0043024">
    <property type="term" value="F:ribosomal small subunit binding"/>
    <property type="evidence" value="ECO:0007669"/>
    <property type="project" value="TreeGrafter"/>
</dbReference>
<dbReference type="GO" id="GO:0070181">
    <property type="term" value="F:small ribosomal subunit rRNA binding"/>
    <property type="evidence" value="ECO:0007669"/>
    <property type="project" value="UniProtKB-UniRule"/>
</dbReference>
<dbReference type="GO" id="GO:0000028">
    <property type="term" value="P:ribosomal small subunit assembly"/>
    <property type="evidence" value="ECO:0007669"/>
    <property type="project" value="TreeGrafter"/>
</dbReference>
<dbReference type="CDD" id="cd04163">
    <property type="entry name" value="Era"/>
    <property type="match status" value="1"/>
</dbReference>
<dbReference type="CDD" id="cd22534">
    <property type="entry name" value="KH-II_Era"/>
    <property type="match status" value="1"/>
</dbReference>
<dbReference type="FunFam" id="3.30.300.20:FF:000003">
    <property type="entry name" value="GTPase Era"/>
    <property type="match status" value="1"/>
</dbReference>
<dbReference type="FunFam" id="3.40.50.300:FF:000094">
    <property type="entry name" value="GTPase Era"/>
    <property type="match status" value="1"/>
</dbReference>
<dbReference type="Gene3D" id="3.30.300.20">
    <property type="match status" value="1"/>
</dbReference>
<dbReference type="Gene3D" id="3.40.50.300">
    <property type="entry name" value="P-loop containing nucleotide triphosphate hydrolases"/>
    <property type="match status" value="1"/>
</dbReference>
<dbReference type="HAMAP" id="MF_00367">
    <property type="entry name" value="GTPase_Era"/>
    <property type="match status" value="1"/>
</dbReference>
<dbReference type="InterPro" id="IPR030388">
    <property type="entry name" value="G_ERA_dom"/>
</dbReference>
<dbReference type="InterPro" id="IPR006073">
    <property type="entry name" value="GTP-bd"/>
</dbReference>
<dbReference type="InterPro" id="IPR005662">
    <property type="entry name" value="GTPase_Era-like"/>
</dbReference>
<dbReference type="InterPro" id="IPR015946">
    <property type="entry name" value="KH_dom-like_a/b"/>
</dbReference>
<dbReference type="InterPro" id="IPR004044">
    <property type="entry name" value="KH_dom_type_2"/>
</dbReference>
<dbReference type="InterPro" id="IPR009019">
    <property type="entry name" value="KH_sf_prok-type"/>
</dbReference>
<dbReference type="InterPro" id="IPR027417">
    <property type="entry name" value="P-loop_NTPase"/>
</dbReference>
<dbReference type="InterPro" id="IPR005225">
    <property type="entry name" value="Small_GTP-bd"/>
</dbReference>
<dbReference type="NCBIfam" id="TIGR00436">
    <property type="entry name" value="era"/>
    <property type="match status" value="1"/>
</dbReference>
<dbReference type="NCBIfam" id="NF000908">
    <property type="entry name" value="PRK00089.1"/>
    <property type="match status" value="1"/>
</dbReference>
<dbReference type="NCBIfam" id="TIGR00231">
    <property type="entry name" value="small_GTP"/>
    <property type="match status" value="1"/>
</dbReference>
<dbReference type="PANTHER" id="PTHR42698">
    <property type="entry name" value="GTPASE ERA"/>
    <property type="match status" value="1"/>
</dbReference>
<dbReference type="PANTHER" id="PTHR42698:SF1">
    <property type="entry name" value="GTPASE ERA, MITOCHONDRIAL"/>
    <property type="match status" value="1"/>
</dbReference>
<dbReference type="Pfam" id="PF07650">
    <property type="entry name" value="KH_2"/>
    <property type="match status" value="1"/>
</dbReference>
<dbReference type="Pfam" id="PF01926">
    <property type="entry name" value="MMR_HSR1"/>
    <property type="match status" value="1"/>
</dbReference>
<dbReference type="SUPFAM" id="SSF52540">
    <property type="entry name" value="P-loop containing nucleoside triphosphate hydrolases"/>
    <property type="match status" value="1"/>
</dbReference>
<dbReference type="SUPFAM" id="SSF54814">
    <property type="entry name" value="Prokaryotic type KH domain (KH-domain type II)"/>
    <property type="match status" value="1"/>
</dbReference>
<dbReference type="PROSITE" id="PS51713">
    <property type="entry name" value="G_ERA"/>
    <property type="match status" value="1"/>
</dbReference>
<dbReference type="PROSITE" id="PS50823">
    <property type="entry name" value="KH_TYPE_2"/>
    <property type="match status" value="1"/>
</dbReference>
<sequence length="303" mass="34473">MSEVEKTYCGFIAIVGRPNVGKSTLLNELLGQKISITSRKPQTTRHRIMGIHTEGPYQAIYVDTPGLHIEEKRAINRLMNRAASSSLGDVELVIFVVEGTHWTADDEMVVNKLRSLQCPVLLAINKVDNVTDKTKLLPHMQFLSQQMNFLDVVPISAEKGMNVDTIASIVRKHMPEAEHHFPEDYITDRSQRFMASEIIREKLMRFLGEELPYSVTVEIEQFVPNERGGYNIHGLILVEREGQKKMVIGNKGSKIKVIGTEARQDMERMFEAKVHLELWVKVKSGWADDERALRSLGYTDDLK</sequence>